<proteinExistence type="inferred from homology"/>
<feature type="chain" id="PRO_0000359916" description="Uncharacterized HTH-type transcriptional regulator YbfP">
    <location>
        <begin position="1"/>
        <end position="295"/>
    </location>
</feature>
<feature type="domain" description="HTH araC/xylS-type" evidence="2">
    <location>
        <begin position="8"/>
        <end position="106"/>
    </location>
</feature>
<feature type="DNA-binding region" description="H-T-H motif" evidence="2">
    <location>
        <begin position="25"/>
        <end position="46"/>
    </location>
</feature>
<comment type="function">
    <text evidence="1">Probable transcriptional regulator.</text>
</comment>
<evidence type="ECO:0000250" key="1"/>
<evidence type="ECO:0000255" key="2">
    <source>
        <dbReference type="PROSITE-ProRule" id="PRU00593"/>
    </source>
</evidence>
<sequence length="295" mass="34217">MYYEKAVQKTINWIESHLHEQISNEDIVNVSSFSKFHFHRIFQKEVGMSVASYIRLRRLANAAAALLYTDHRIIDIALYYQFESQEAFTRTFKKMYHMPPGAYRTFMKRFTSKKEESYMEKKMKGWVLSGSHPFQFEMGIDRENVHQGKASGYLKSTMVQDIGEFATMMQQFKADRYLGKRLRLSSFIKTKGVQHFASLWMRVDSAADDVLQFDNMSNRPITGTTNWNHYAIVLDVPENSAVISFGVQLSGPGQVWMDHVVFEEVDESVPSTNLEMPGELLDEPVNLSFEEELQK</sequence>
<dbReference type="EMBL" id="AB006424">
    <property type="protein sequence ID" value="BAA33129.1"/>
    <property type="molecule type" value="Genomic_DNA"/>
</dbReference>
<dbReference type="EMBL" id="AL009126">
    <property type="protein sequence ID" value="CAB12026.1"/>
    <property type="molecule type" value="Genomic_DNA"/>
</dbReference>
<dbReference type="PIR" id="B69750">
    <property type="entry name" value="B69750"/>
</dbReference>
<dbReference type="RefSeq" id="NP_388114.1">
    <property type="nucleotide sequence ID" value="NC_000964.3"/>
</dbReference>
<dbReference type="RefSeq" id="WP_003246240.1">
    <property type="nucleotide sequence ID" value="NZ_OZ025638.1"/>
</dbReference>
<dbReference type="SMR" id="O31456"/>
<dbReference type="FunCoup" id="O31456">
    <property type="interactions" value="9"/>
</dbReference>
<dbReference type="STRING" id="224308.BSU02320"/>
<dbReference type="PaxDb" id="224308-BSU02320"/>
<dbReference type="DNASU" id="938428"/>
<dbReference type="EnsemblBacteria" id="CAB12026">
    <property type="protein sequence ID" value="CAB12026"/>
    <property type="gene ID" value="BSU_02320"/>
</dbReference>
<dbReference type="GeneID" id="938428"/>
<dbReference type="KEGG" id="bsu:BSU02320"/>
<dbReference type="PATRIC" id="fig|224308.179.peg.238"/>
<dbReference type="eggNOG" id="COG2207">
    <property type="taxonomic scope" value="Bacteria"/>
</dbReference>
<dbReference type="InParanoid" id="O31456"/>
<dbReference type="OrthoDB" id="8365150at2"/>
<dbReference type="BioCyc" id="BSUB:BSU02320-MONOMER"/>
<dbReference type="Proteomes" id="UP000001570">
    <property type="component" value="Chromosome"/>
</dbReference>
<dbReference type="GO" id="GO:0005829">
    <property type="term" value="C:cytosol"/>
    <property type="evidence" value="ECO:0000318"/>
    <property type="project" value="GO_Central"/>
</dbReference>
<dbReference type="GO" id="GO:0001108">
    <property type="term" value="F:bacterial-type RNA polymerase holo enzyme binding"/>
    <property type="evidence" value="ECO:0000318"/>
    <property type="project" value="GO_Central"/>
</dbReference>
<dbReference type="GO" id="GO:0003700">
    <property type="term" value="F:DNA-binding transcription factor activity"/>
    <property type="evidence" value="ECO:0007669"/>
    <property type="project" value="InterPro"/>
</dbReference>
<dbReference type="GO" id="GO:0043565">
    <property type="term" value="F:sequence-specific DNA binding"/>
    <property type="evidence" value="ECO:0000318"/>
    <property type="project" value="GO_Central"/>
</dbReference>
<dbReference type="GO" id="GO:0006355">
    <property type="term" value="P:regulation of DNA-templated transcription"/>
    <property type="evidence" value="ECO:0000318"/>
    <property type="project" value="GO_Central"/>
</dbReference>
<dbReference type="Gene3D" id="2.60.120.260">
    <property type="entry name" value="Galactose-binding domain-like"/>
    <property type="match status" value="1"/>
</dbReference>
<dbReference type="Gene3D" id="1.10.10.60">
    <property type="entry name" value="Homeodomain-like"/>
    <property type="match status" value="2"/>
</dbReference>
<dbReference type="InterPro" id="IPR009057">
    <property type="entry name" value="Homeodomain-like_sf"/>
</dbReference>
<dbReference type="InterPro" id="IPR018060">
    <property type="entry name" value="HTH_AraC"/>
</dbReference>
<dbReference type="InterPro" id="IPR050959">
    <property type="entry name" value="MarA-like"/>
</dbReference>
<dbReference type="PANTHER" id="PTHR47504:SF6">
    <property type="entry name" value="ARAC-FAMILY TRANSCRIPTIONAL REGULATOR"/>
    <property type="match status" value="1"/>
</dbReference>
<dbReference type="PANTHER" id="PTHR47504">
    <property type="entry name" value="RIGHT ORIGIN-BINDING PROTEIN"/>
    <property type="match status" value="1"/>
</dbReference>
<dbReference type="Pfam" id="PF12833">
    <property type="entry name" value="HTH_18"/>
    <property type="match status" value="1"/>
</dbReference>
<dbReference type="SMART" id="SM00342">
    <property type="entry name" value="HTH_ARAC"/>
    <property type="match status" value="1"/>
</dbReference>
<dbReference type="SUPFAM" id="SSF46689">
    <property type="entry name" value="Homeodomain-like"/>
    <property type="match status" value="2"/>
</dbReference>
<dbReference type="PROSITE" id="PS01124">
    <property type="entry name" value="HTH_ARAC_FAMILY_2"/>
    <property type="match status" value="1"/>
</dbReference>
<organism>
    <name type="scientific">Bacillus subtilis (strain 168)</name>
    <dbReference type="NCBI Taxonomy" id="224308"/>
    <lineage>
        <taxon>Bacteria</taxon>
        <taxon>Bacillati</taxon>
        <taxon>Bacillota</taxon>
        <taxon>Bacilli</taxon>
        <taxon>Bacillales</taxon>
        <taxon>Bacillaceae</taxon>
        <taxon>Bacillus</taxon>
    </lineage>
</organism>
<gene>
    <name type="primary">ybfP</name>
    <name type="ordered locus">BSU02320</name>
</gene>
<reference key="1">
    <citation type="submission" date="1997-07" db="EMBL/GenBank/DDBJ databases">
        <title>Sequence analysis of the 70kb region between 17 and 23 degree of the Bacillus subtilis chromosome.</title>
        <authorList>
            <person name="Haga K."/>
            <person name="Liu H."/>
            <person name="Yasumoto K."/>
            <person name="Takahashi H."/>
            <person name="Yoshikawa H."/>
        </authorList>
    </citation>
    <scope>NUCLEOTIDE SEQUENCE [GENOMIC DNA]</scope>
    <source>
        <strain>168</strain>
    </source>
</reference>
<reference key="2">
    <citation type="journal article" date="1997" name="Nature">
        <title>The complete genome sequence of the Gram-positive bacterium Bacillus subtilis.</title>
        <authorList>
            <person name="Kunst F."/>
            <person name="Ogasawara N."/>
            <person name="Moszer I."/>
            <person name="Albertini A.M."/>
            <person name="Alloni G."/>
            <person name="Azevedo V."/>
            <person name="Bertero M.G."/>
            <person name="Bessieres P."/>
            <person name="Bolotin A."/>
            <person name="Borchert S."/>
            <person name="Borriss R."/>
            <person name="Boursier L."/>
            <person name="Brans A."/>
            <person name="Braun M."/>
            <person name="Brignell S.C."/>
            <person name="Bron S."/>
            <person name="Brouillet S."/>
            <person name="Bruschi C.V."/>
            <person name="Caldwell B."/>
            <person name="Capuano V."/>
            <person name="Carter N.M."/>
            <person name="Choi S.-K."/>
            <person name="Codani J.-J."/>
            <person name="Connerton I.F."/>
            <person name="Cummings N.J."/>
            <person name="Daniel R.A."/>
            <person name="Denizot F."/>
            <person name="Devine K.M."/>
            <person name="Duesterhoeft A."/>
            <person name="Ehrlich S.D."/>
            <person name="Emmerson P.T."/>
            <person name="Entian K.-D."/>
            <person name="Errington J."/>
            <person name="Fabret C."/>
            <person name="Ferrari E."/>
            <person name="Foulger D."/>
            <person name="Fritz C."/>
            <person name="Fujita M."/>
            <person name="Fujita Y."/>
            <person name="Fuma S."/>
            <person name="Galizzi A."/>
            <person name="Galleron N."/>
            <person name="Ghim S.-Y."/>
            <person name="Glaser P."/>
            <person name="Goffeau A."/>
            <person name="Golightly E.J."/>
            <person name="Grandi G."/>
            <person name="Guiseppi G."/>
            <person name="Guy B.J."/>
            <person name="Haga K."/>
            <person name="Haiech J."/>
            <person name="Harwood C.R."/>
            <person name="Henaut A."/>
            <person name="Hilbert H."/>
            <person name="Holsappel S."/>
            <person name="Hosono S."/>
            <person name="Hullo M.-F."/>
            <person name="Itaya M."/>
            <person name="Jones L.-M."/>
            <person name="Joris B."/>
            <person name="Karamata D."/>
            <person name="Kasahara Y."/>
            <person name="Klaerr-Blanchard M."/>
            <person name="Klein C."/>
            <person name="Kobayashi Y."/>
            <person name="Koetter P."/>
            <person name="Koningstein G."/>
            <person name="Krogh S."/>
            <person name="Kumano M."/>
            <person name="Kurita K."/>
            <person name="Lapidus A."/>
            <person name="Lardinois S."/>
            <person name="Lauber J."/>
            <person name="Lazarevic V."/>
            <person name="Lee S.-M."/>
            <person name="Levine A."/>
            <person name="Liu H."/>
            <person name="Masuda S."/>
            <person name="Mauel C."/>
            <person name="Medigue C."/>
            <person name="Medina N."/>
            <person name="Mellado R.P."/>
            <person name="Mizuno M."/>
            <person name="Moestl D."/>
            <person name="Nakai S."/>
            <person name="Noback M."/>
            <person name="Noone D."/>
            <person name="O'Reilly M."/>
            <person name="Ogawa K."/>
            <person name="Ogiwara A."/>
            <person name="Oudega B."/>
            <person name="Park S.-H."/>
            <person name="Parro V."/>
            <person name="Pohl T.M."/>
            <person name="Portetelle D."/>
            <person name="Porwollik S."/>
            <person name="Prescott A.M."/>
            <person name="Presecan E."/>
            <person name="Pujic P."/>
            <person name="Purnelle B."/>
            <person name="Rapoport G."/>
            <person name="Rey M."/>
            <person name="Reynolds S."/>
            <person name="Rieger M."/>
            <person name="Rivolta C."/>
            <person name="Rocha E."/>
            <person name="Roche B."/>
            <person name="Rose M."/>
            <person name="Sadaie Y."/>
            <person name="Sato T."/>
            <person name="Scanlan E."/>
            <person name="Schleich S."/>
            <person name="Schroeter R."/>
            <person name="Scoffone F."/>
            <person name="Sekiguchi J."/>
            <person name="Sekowska A."/>
            <person name="Seror S.J."/>
            <person name="Serror P."/>
            <person name="Shin B.-S."/>
            <person name="Soldo B."/>
            <person name="Sorokin A."/>
            <person name="Tacconi E."/>
            <person name="Takagi T."/>
            <person name="Takahashi H."/>
            <person name="Takemaru K."/>
            <person name="Takeuchi M."/>
            <person name="Tamakoshi A."/>
            <person name="Tanaka T."/>
            <person name="Terpstra P."/>
            <person name="Tognoni A."/>
            <person name="Tosato V."/>
            <person name="Uchiyama S."/>
            <person name="Vandenbol M."/>
            <person name="Vannier F."/>
            <person name="Vassarotti A."/>
            <person name="Viari A."/>
            <person name="Wambutt R."/>
            <person name="Wedler E."/>
            <person name="Wedler H."/>
            <person name="Weitzenegger T."/>
            <person name="Winters P."/>
            <person name="Wipat A."/>
            <person name="Yamamoto H."/>
            <person name="Yamane K."/>
            <person name="Yasumoto K."/>
            <person name="Yata K."/>
            <person name="Yoshida K."/>
            <person name="Yoshikawa H.-F."/>
            <person name="Zumstein E."/>
            <person name="Yoshikawa H."/>
            <person name="Danchin A."/>
        </authorList>
    </citation>
    <scope>NUCLEOTIDE SEQUENCE [LARGE SCALE GENOMIC DNA]</scope>
    <source>
        <strain>168</strain>
    </source>
</reference>
<protein>
    <recommendedName>
        <fullName>Uncharacterized HTH-type transcriptional regulator YbfP</fullName>
    </recommendedName>
</protein>
<keyword id="KW-0238">DNA-binding</keyword>
<keyword id="KW-1185">Reference proteome</keyword>
<keyword id="KW-0804">Transcription</keyword>
<keyword id="KW-0805">Transcription regulation</keyword>
<accession>O31456</accession>
<accession>Q7DL46</accession>
<name>YBFP_BACSU</name>